<dbReference type="EMBL" id="CU459141">
    <property type="protein sequence ID" value="CAM86297.1"/>
    <property type="molecule type" value="Genomic_DNA"/>
</dbReference>
<dbReference type="RefSeq" id="WP_001216679.1">
    <property type="nucleotide sequence ID" value="NZ_JBDGFB010000016.1"/>
</dbReference>
<dbReference type="SMR" id="B0V7G7"/>
<dbReference type="EnsemblBacteria" id="CAM86297">
    <property type="protein sequence ID" value="CAM86297"/>
    <property type="gene ID" value="ABAYE1384"/>
</dbReference>
<dbReference type="GeneID" id="92894413"/>
<dbReference type="KEGG" id="aby:ABAYE1384"/>
<dbReference type="HOGENOM" id="CLU_113441_6_1_6"/>
<dbReference type="GO" id="GO:0022627">
    <property type="term" value="C:cytosolic small ribosomal subunit"/>
    <property type="evidence" value="ECO:0007669"/>
    <property type="project" value="TreeGrafter"/>
</dbReference>
<dbReference type="GO" id="GO:0070181">
    <property type="term" value="F:small ribosomal subunit rRNA binding"/>
    <property type="evidence" value="ECO:0007669"/>
    <property type="project" value="TreeGrafter"/>
</dbReference>
<dbReference type="GO" id="GO:0003735">
    <property type="term" value="F:structural constituent of ribosome"/>
    <property type="evidence" value="ECO:0007669"/>
    <property type="project" value="InterPro"/>
</dbReference>
<dbReference type="GO" id="GO:0006412">
    <property type="term" value="P:translation"/>
    <property type="evidence" value="ECO:0007669"/>
    <property type="project" value="UniProtKB-UniRule"/>
</dbReference>
<dbReference type="CDD" id="cd00473">
    <property type="entry name" value="bS6"/>
    <property type="match status" value="1"/>
</dbReference>
<dbReference type="FunFam" id="3.30.70.60:FF:000003">
    <property type="entry name" value="30S ribosomal protein S6"/>
    <property type="match status" value="1"/>
</dbReference>
<dbReference type="Gene3D" id="3.30.70.60">
    <property type="match status" value="1"/>
</dbReference>
<dbReference type="HAMAP" id="MF_00360">
    <property type="entry name" value="Ribosomal_bS6"/>
    <property type="match status" value="1"/>
</dbReference>
<dbReference type="InterPro" id="IPR000529">
    <property type="entry name" value="Ribosomal_bS6"/>
</dbReference>
<dbReference type="InterPro" id="IPR020815">
    <property type="entry name" value="Ribosomal_bS6_CS"/>
</dbReference>
<dbReference type="InterPro" id="IPR035980">
    <property type="entry name" value="Ribosomal_bS6_sf"/>
</dbReference>
<dbReference type="InterPro" id="IPR020814">
    <property type="entry name" value="Ribosomal_S6_plastid/chlpt"/>
</dbReference>
<dbReference type="InterPro" id="IPR014717">
    <property type="entry name" value="Transl_elong_EF1B/ribsomal_bS6"/>
</dbReference>
<dbReference type="NCBIfam" id="TIGR00166">
    <property type="entry name" value="S6"/>
    <property type="match status" value="1"/>
</dbReference>
<dbReference type="PANTHER" id="PTHR21011">
    <property type="entry name" value="MITOCHONDRIAL 28S RIBOSOMAL PROTEIN S6"/>
    <property type="match status" value="1"/>
</dbReference>
<dbReference type="PANTHER" id="PTHR21011:SF1">
    <property type="entry name" value="SMALL RIBOSOMAL SUBUNIT PROTEIN BS6M"/>
    <property type="match status" value="1"/>
</dbReference>
<dbReference type="Pfam" id="PF01250">
    <property type="entry name" value="Ribosomal_S6"/>
    <property type="match status" value="1"/>
</dbReference>
<dbReference type="SUPFAM" id="SSF54995">
    <property type="entry name" value="Ribosomal protein S6"/>
    <property type="match status" value="1"/>
</dbReference>
<dbReference type="PROSITE" id="PS01048">
    <property type="entry name" value="RIBOSOMAL_S6"/>
    <property type="match status" value="1"/>
</dbReference>
<evidence type="ECO:0000255" key="1">
    <source>
        <dbReference type="HAMAP-Rule" id="MF_00360"/>
    </source>
</evidence>
<evidence type="ECO:0000305" key="2"/>
<protein>
    <recommendedName>
        <fullName evidence="1">Small ribosomal subunit protein bS6</fullName>
    </recommendedName>
    <alternativeName>
        <fullName evidence="2">30S ribosomal protein S6</fullName>
    </alternativeName>
</protein>
<accession>B0V7G7</accession>
<keyword id="KW-0687">Ribonucleoprotein</keyword>
<keyword id="KW-0689">Ribosomal protein</keyword>
<keyword id="KW-0694">RNA-binding</keyword>
<keyword id="KW-0699">rRNA-binding</keyword>
<gene>
    <name evidence="1" type="primary">rpsF</name>
    <name type="ordered locus">ABAYE1384</name>
</gene>
<sequence length="127" mass="14963">MRHYEIVLLVHPDQSDQVVGMVERYISQIKEADGQIHRLEDWGRRQLAYPINKIHKAHYILMNVECGQSTLDELEELFRYNDAIIRNLIIRREHAITEESLLAKSAEEKRARKAQREEAQQVAQEAE</sequence>
<organism>
    <name type="scientific">Acinetobacter baumannii (strain AYE)</name>
    <dbReference type="NCBI Taxonomy" id="509173"/>
    <lineage>
        <taxon>Bacteria</taxon>
        <taxon>Pseudomonadati</taxon>
        <taxon>Pseudomonadota</taxon>
        <taxon>Gammaproteobacteria</taxon>
        <taxon>Moraxellales</taxon>
        <taxon>Moraxellaceae</taxon>
        <taxon>Acinetobacter</taxon>
        <taxon>Acinetobacter calcoaceticus/baumannii complex</taxon>
    </lineage>
</organism>
<feature type="chain" id="PRO_1000120695" description="Small ribosomal subunit protein bS6">
    <location>
        <begin position="1"/>
        <end position="127"/>
    </location>
</feature>
<comment type="function">
    <text evidence="1">Binds together with bS18 to 16S ribosomal RNA.</text>
</comment>
<comment type="similarity">
    <text evidence="1">Belongs to the bacterial ribosomal protein bS6 family.</text>
</comment>
<reference key="1">
    <citation type="journal article" date="2008" name="PLoS ONE">
        <title>Comparative analysis of Acinetobacters: three genomes for three lifestyles.</title>
        <authorList>
            <person name="Vallenet D."/>
            <person name="Nordmann P."/>
            <person name="Barbe V."/>
            <person name="Poirel L."/>
            <person name="Mangenot S."/>
            <person name="Bataille E."/>
            <person name="Dossat C."/>
            <person name="Gas S."/>
            <person name="Kreimeyer A."/>
            <person name="Lenoble P."/>
            <person name="Oztas S."/>
            <person name="Poulain J."/>
            <person name="Segurens B."/>
            <person name="Robert C."/>
            <person name="Abergel C."/>
            <person name="Claverie J.-M."/>
            <person name="Raoult D."/>
            <person name="Medigue C."/>
            <person name="Weissenbach J."/>
            <person name="Cruveiller S."/>
        </authorList>
    </citation>
    <scope>NUCLEOTIDE SEQUENCE [LARGE SCALE GENOMIC DNA]</scope>
    <source>
        <strain>AYE</strain>
    </source>
</reference>
<name>RS6_ACIBY</name>
<proteinExistence type="inferred from homology"/>